<organism>
    <name type="scientific">Sorghum bicolor</name>
    <name type="common">Sorghum</name>
    <name type="synonym">Sorghum vulgare</name>
    <dbReference type="NCBI Taxonomy" id="4558"/>
    <lineage>
        <taxon>Eukaryota</taxon>
        <taxon>Viridiplantae</taxon>
        <taxon>Streptophyta</taxon>
        <taxon>Embryophyta</taxon>
        <taxon>Tracheophyta</taxon>
        <taxon>Spermatophyta</taxon>
        <taxon>Magnoliopsida</taxon>
        <taxon>Liliopsida</taxon>
        <taxon>Poales</taxon>
        <taxon>Poaceae</taxon>
        <taxon>PACMAD clade</taxon>
        <taxon>Panicoideae</taxon>
        <taxon>Andropogonodae</taxon>
        <taxon>Andropogoneae</taxon>
        <taxon>Sorghinae</taxon>
        <taxon>Sorghum</taxon>
    </lineage>
</organism>
<protein>
    <recommendedName>
        <fullName>Kafirin PGK1</fullName>
    </recommendedName>
</protein>
<dbReference type="EMBL" id="X16104">
    <property type="protein sequence ID" value="CAA34230.1"/>
    <property type="molecule type" value="Genomic_DNA"/>
</dbReference>
<dbReference type="PIR" id="S04124">
    <property type="entry name" value="S04124"/>
</dbReference>
<dbReference type="eggNOG" id="ENOG502R48M">
    <property type="taxonomic scope" value="Eukaryota"/>
</dbReference>
<dbReference type="ExpressionAtlas" id="P14690">
    <property type="expression patterns" value="baseline"/>
</dbReference>
<dbReference type="GO" id="GO:0045735">
    <property type="term" value="F:nutrient reservoir activity"/>
    <property type="evidence" value="ECO:0007669"/>
    <property type="project" value="UniProtKB-KW"/>
</dbReference>
<dbReference type="InterPro" id="IPR051529">
    <property type="entry name" value="Seed_Storage_Prolamin"/>
</dbReference>
<dbReference type="InterPro" id="IPR002530">
    <property type="entry name" value="Zein"/>
</dbReference>
<dbReference type="PANTHER" id="PTHR48199">
    <property type="entry name" value="ALPHA KAFIRIN"/>
    <property type="match status" value="1"/>
</dbReference>
<dbReference type="PANTHER" id="PTHR48199:SF1">
    <property type="entry name" value="ALPHA KAFIRIN"/>
    <property type="match status" value="1"/>
</dbReference>
<dbReference type="Pfam" id="PF01559">
    <property type="entry name" value="Zein"/>
    <property type="match status" value="1"/>
</dbReference>
<feature type="signal peptide">
    <location>
        <begin position="1"/>
        <end position="21"/>
    </location>
</feature>
<feature type="chain" id="PRO_0000041629" description="Kafirin PGK1">
    <location>
        <begin position="22"/>
        <end position="269"/>
    </location>
</feature>
<accession>P14690</accession>
<evidence type="ECO:0000305" key="1"/>
<proteinExistence type="inferred from homology"/>
<keyword id="KW-0708">Seed storage protein</keyword>
<keyword id="KW-0732">Signal</keyword>
<keyword id="KW-0758">Storage protein</keyword>
<reference key="1">
    <citation type="journal article" date="1989" name="Plant Mol. Biol.">
        <title>Characterisation of the kafirin gene family from sorghum reveals extensive homology with zein from maize.</title>
        <authorList>
            <person name="Derose R.T."/>
            <person name="Ma D.P."/>
            <person name="Kwon I.S."/>
            <person name="Hasnain S.E."/>
            <person name="Klassy R.C."/>
            <person name="Hall T.C."/>
        </authorList>
    </citation>
    <scope>NUCLEOTIDE SEQUENCE [GENOMIC DNA]</scope>
    <source>
        <strain>cv. RTx430</strain>
    </source>
</reference>
<comment type="function">
    <text>Major seed storage prolamin.</text>
</comment>
<comment type="similarity">
    <text evidence="1">Belongs to the zein family.</text>
</comment>
<name>KAF1_SORBI</name>
<sequence length="269" mass="29213">MATKIFALLALHALLVSGTTAAIIPQCSLAPNAIIPQFIPPVTALGNEHLAVQAYPGQQVLSASILQQPIAQLQQQSLAHLTVQTITAQQQQQQQQQQQQQQFLSSLSALAVANQAAYLQQQLLTSNPHSLANAAAYQQQQQLQLAMANPTAYVQQQLLLSNPQAATNAATYLQQQQFQQILPALSQLRMANPTAYLQQQQLLPINQLALANTDAYLQQQQLLPVNPLVVANPLVAAFLQQQQLSSFNQISLVNPALSWQQPIIGGAIF</sequence>